<proteinExistence type="evidence at protein level"/>
<reference key="1">
    <citation type="journal article" date="2004" name="Nat. Genet.">
        <title>Complete sequencing and characterization of 21,243 full-length human cDNAs.</title>
        <authorList>
            <person name="Ota T."/>
            <person name="Suzuki Y."/>
            <person name="Nishikawa T."/>
            <person name="Otsuki T."/>
            <person name="Sugiyama T."/>
            <person name="Irie R."/>
            <person name="Wakamatsu A."/>
            <person name="Hayashi K."/>
            <person name="Sato H."/>
            <person name="Nagai K."/>
            <person name="Kimura K."/>
            <person name="Makita H."/>
            <person name="Sekine M."/>
            <person name="Obayashi M."/>
            <person name="Nishi T."/>
            <person name="Shibahara T."/>
            <person name="Tanaka T."/>
            <person name="Ishii S."/>
            <person name="Yamamoto J."/>
            <person name="Saito K."/>
            <person name="Kawai Y."/>
            <person name="Isono Y."/>
            <person name="Nakamura Y."/>
            <person name="Nagahari K."/>
            <person name="Murakami K."/>
            <person name="Yasuda T."/>
            <person name="Iwayanagi T."/>
            <person name="Wagatsuma M."/>
            <person name="Shiratori A."/>
            <person name="Sudo H."/>
            <person name="Hosoiri T."/>
            <person name="Kaku Y."/>
            <person name="Kodaira H."/>
            <person name="Kondo H."/>
            <person name="Sugawara M."/>
            <person name="Takahashi M."/>
            <person name="Kanda K."/>
            <person name="Yokoi T."/>
            <person name="Furuya T."/>
            <person name="Kikkawa E."/>
            <person name="Omura Y."/>
            <person name="Abe K."/>
            <person name="Kamihara K."/>
            <person name="Katsuta N."/>
            <person name="Sato K."/>
            <person name="Tanikawa M."/>
            <person name="Yamazaki M."/>
            <person name="Ninomiya K."/>
            <person name="Ishibashi T."/>
            <person name="Yamashita H."/>
            <person name="Murakawa K."/>
            <person name="Fujimori K."/>
            <person name="Tanai H."/>
            <person name="Kimata M."/>
            <person name="Watanabe M."/>
            <person name="Hiraoka S."/>
            <person name="Chiba Y."/>
            <person name="Ishida S."/>
            <person name="Ono Y."/>
            <person name="Takiguchi S."/>
            <person name="Watanabe S."/>
            <person name="Yosida M."/>
            <person name="Hotuta T."/>
            <person name="Kusano J."/>
            <person name="Kanehori K."/>
            <person name="Takahashi-Fujii A."/>
            <person name="Hara H."/>
            <person name="Tanase T.-O."/>
            <person name="Nomura Y."/>
            <person name="Togiya S."/>
            <person name="Komai F."/>
            <person name="Hara R."/>
            <person name="Takeuchi K."/>
            <person name="Arita M."/>
            <person name="Imose N."/>
            <person name="Musashino K."/>
            <person name="Yuuki H."/>
            <person name="Oshima A."/>
            <person name="Sasaki N."/>
            <person name="Aotsuka S."/>
            <person name="Yoshikawa Y."/>
            <person name="Matsunawa H."/>
            <person name="Ichihara T."/>
            <person name="Shiohata N."/>
            <person name="Sano S."/>
            <person name="Moriya S."/>
            <person name="Momiyama H."/>
            <person name="Satoh N."/>
            <person name="Takami S."/>
            <person name="Terashima Y."/>
            <person name="Suzuki O."/>
            <person name="Nakagawa S."/>
            <person name="Senoh A."/>
            <person name="Mizoguchi H."/>
            <person name="Goto Y."/>
            <person name="Shimizu F."/>
            <person name="Wakebe H."/>
            <person name="Hishigaki H."/>
            <person name="Watanabe T."/>
            <person name="Sugiyama A."/>
            <person name="Takemoto M."/>
            <person name="Kawakami B."/>
            <person name="Yamazaki M."/>
            <person name="Watanabe K."/>
            <person name="Kumagai A."/>
            <person name="Itakura S."/>
            <person name="Fukuzumi Y."/>
            <person name="Fujimori Y."/>
            <person name="Komiyama M."/>
            <person name="Tashiro H."/>
            <person name="Tanigami A."/>
            <person name="Fujiwara T."/>
            <person name="Ono T."/>
            <person name="Yamada K."/>
            <person name="Fujii Y."/>
            <person name="Ozaki K."/>
            <person name="Hirao M."/>
            <person name="Ohmori Y."/>
            <person name="Kawabata A."/>
            <person name="Hikiji T."/>
            <person name="Kobatake N."/>
            <person name="Inagaki H."/>
            <person name="Ikema Y."/>
            <person name="Okamoto S."/>
            <person name="Okitani R."/>
            <person name="Kawakami T."/>
            <person name="Noguchi S."/>
            <person name="Itoh T."/>
            <person name="Shigeta K."/>
            <person name="Senba T."/>
            <person name="Matsumura K."/>
            <person name="Nakajima Y."/>
            <person name="Mizuno T."/>
            <person name="Morinaga M."/>
            <person name="Sasaki M."/>
            <person name="Togashi T."/>
            <person name="Oyama M."/>
            <person name="Hata H."/>
            <person name="Watanabe M."/>
            <person name="Komatsu T."/>
            <person name="Mizushima-Sugano J."/>
            <person name="Satoh T."/>
            <person name="Shirai Y."/>
            <person name="Takahashi Y."/>
            <person name="Nakagawa K."/>
            <person name="Okumura K."/>
            <person name="Nagase T."/>
            <person name="Nomura N."/>
            <person name="Kikuchi H."/>
            <person name="Masuho Y."/>
            <person name="Yamashita R."/>
            <person name="Nakai K."/>
            <person name="Yada T."/>
            <person name="Nakamura Y."/>
            <person name="Ohara O."/>
            <person name="Isogai T."/>
            <person name="Sugano S."/>
        </authorList>
    </citation>
    <scope>NUCLEOTIDE SEQUENCE [LARGE SCALE MRNA] (ISOFORM 2)</scope>
    <source>
        <tissue>Testis</tissue>
    </source>
</reference>
<reference key="2">
    <citation type="submission" date="2005-07" db="EMBL/GenBank/DDBJ databases">
        <authorList>
            <person name="Mural R.J."/>
            <person name="Istrail S."/>
            <person name="Sutton G.G."/>
            <person name="Florea L."/>
            <person name="Halpern A.L."/>
            <person name="Mobarry C.M."/>
            <person name="Lippert R."/>
            <person name="Walenz B."/>
            <person name="Shatkay H."/>
            <person name="Dew I."/>
            <person name="Miller J.R."/>
            <person name="Flanigan M.J."/>
            <person name="Edwards N.J."/>
            <person name="Bolanos R."/>
            <person name="Fasulo D."/>
            <person name="Halldorsson B.V."/>
            <person name="Hannenhalli S."/>
            <person name="Turner R."/>
            <person name="Yooseph S."/>
            <person name="Lu F."/>
            <person name="Nusskern D.R."/>
            <person name="Shue B.C."/>
            <person name="Zheng X.H."/>
            <person name="Zhong F."/>
            <person name="Delcher A.L."/>
            <person name="Huson D.H."/>
            <person name="Kravitz S.A."/>
            <person name="Mouchard L."/>
            <person name="Reinert K."/>
            <person name="Remington K.A."/>
            <person name="Clark A.G."/>
            <person name="Waterman M.S."/>
            <person name="Eichler E.E."/>
            <person name="Adams M.D."/>
            <person name="Hunkapiller M.W."/>
            <person name="Myers E.W."/>
            <person name="Venter J.C."/>
        </authorList>
    </citation>
    <scope>NUCLEOTIDE SEQUENCE [LARGE SCALE GENOMIC DNA]</scope>
</reference>
<reference key="3">
    <citation type="journal article" date="2004" name="Genome Res.">
        <title>The status, quality, and expansion of the NIH full-length cDNA project: the Mammalian Gene Collection (MGC).</title>
        <authorList>
            <consortium name="The MGC Project Team"/>
        </authorList>
    </citation>
    <scope>NUCLEOTIDE SEQUENCE [LARGE SCALE MRNA] (ISOFORM 1)</scope>
    <source>
        <tissue>Brain</tissue>
    </source>
</reference>
<reference key="4">
    <citation type="submission" date="2000-07" db="EMBL/GenBank/DDBJ databases">
        <authorList>
            <consortium name="The European IMAGE consortium"/>
        </authorList>
    </citation>
    <scope>NUCLEOTIDE SEQUENCE [LARGE SCALE MRNA] OF 306-686 (ISOFORM 1)</scope>
</reference>
<name>WDR93_HUMAN</name>
<sequence length="686" mass="77378">MSFPRGSQTQKIKHPIGTRKGPLEVPPPTEKDWPKDDEQDHVLVDPDEELDSLPQPYRMINKLVNLLFDQSWEIIEERNALREAESSQIQPTVYPPLGEIQLNKMPNCMAVSQDYVFIGGAKGFSIYNLYSAKQIYAWEKLKVDVTSIWATDLGNEILIAPVDEMGIIRLFYFYKEGLYLVKAINEVDDTSKQTTCIKMEISQGGDFAAFLLQGAGDIWLDVYKLPKETWLKKLEHPQLTSNPKKKVRQPQLNSLGPISADPLEMDANVSFKGDIKLSLPVYIMKIKPPKPVTGTTFKSPLEVFAKIKDCYGLGSGQNHFIKDSQWEQQAEIFNASYKKYLDREWEEEPLSTATFYFLLPSCLFAMPPEVKGPSGMACVLGIHWTRSHNFFLYSLNRTLKDKADPEGVWPCAAPIAVSQLSCSSSYLVLACEDGVLTLWDLAKGFPLGVAALPQGCFCQSIHFLKYFSVHKGQNMYPEGQVKSQMKCVVLCTDASLHLVEASGTQGPTISVLVERPVKHLDKTICAVAPVPALPGMVLIFSKNGSVCLMDVAKREIICAFAPPGAFPLEVPWKPVFAVSPDHPCFLLRGDYSHETASTDDAGIQYSVFYFNFEACPLLENISKNCTIPQRDLDNMAFPQALPLEKRCERFLQKSYRKLEKNPEKEEEHWARLQRYSLSLQRENFKK</sequence>
<gene>
    <name type="primary">WDR93</name>
</gene>
<protein>
    <recommendedName>
        <fullName>WD repeat-containing protein 93</fullName>
    </recommendedName>
</protein>
<organism>
    <name type="scientific">Homo sapiens</name>
    <name type="common">Human</name>
    <dbReference type="NCBI Taxonomy" id="9606"/>
    <lineage>
        <taxon>Eukaryota</taxon>
        <taxon>Metazoa</taxon>
        <taxon>Chordata</taxon>
        <taxon>Craniata</taxon>
        <taxon>Vertebrata</taxon>
        <taxon>Euteleostomi</taxon>
        <taxon>Mammalia</taxon>
        <taxon>Eutheria</taxon>
        <taxon>Euarchontoglires</taxon>
        <taxon>Primates</taxon>
        <taxon>Haplorrhini</taxon>
        <taxon>Catarrhini</taxon>
        <taxon>Hominidae</taxon>
        <taxon>Homo</taxon>
    </lineage>
</organism>
<dbReference type="EMBL" id="AK097525">
    <property type="protein sequence ID" value="BAC05088.1"/>
    <property type="molecule type" value="mRNA"/>
</dbReference>
<dbReference type="EMBL" id="CH471101">
    <property type="protein sequence ID" value="EAX02063.1"/>
    <property type="molecule type" value="Genomic_DNA"/>
</dbReference>
<dbReference type="EMBL" id="BC064626">
    <property type="protein sequence ID" value="AAH64626.1"/>
    <property type="molecule type" value="mRNA"/>
</dbReference>
<dbReference type="EMBL" id="AL390084">
    <property type="protein sequence ID" value="CAB98208.1"/>
    <property type="molecule type" value="mRNA"/>
</dbReference>
<dbReference type="EMBL" id="AL390085">
    <property type="protein sequence ID" value="CAB98209.1"/>
    <property type="molecule type" value="mRNA"/>
</dbReference>
<dbReference type="CCDS" id="CCDS32326.1">
    <molecule id="Q6P2C0-1"/>
</dbReference>
<dbReference type="CCDS" id="CCDS66862.1">
    <molecule id="Q6P2C0-2"/>
</dbReference>
<dbReference type="RefSeq" id="NP_001271324.1">
    <molecule id="Q6P2C0-2"/>
    <property type="nucleotide sequence ID" value="NM_001284395.2"/>
</dbReference>
<dbReference type="RefSeq" id="NP_001271325.1">
    <property type="nucleotide sequence ID" value="NM_001284396.1"/>
</dbReference>
<dbReference type="RefSeq" id="NP_064597.1">
    <molecule id="Q6P2C0-1"/>
    <property type="nucleotide sequence ID" value="NM_020212.2"/>
</dbReference>
<dbReference type="SMR" id="Q6P2C0"/>
<dbReference type="BioGRID" id="121285">
    <property type="interactions" value="2"/>
</dbReference>
<dbReference type="FunCoup" id="Q6P2C0">
    <property type="interactions" value="19"/>
</dbReference>
<dbReference type="STRING" id="9606.ENSP00000268130"/>
<dbReference type="iPTMnet" id="Q6P2C0"/>
<dbReference type="PhosphoSitePlus" id="Q6P2C0"/>
<dbReference type="BioMuta" id="WDR93"/>
<dbReference type="DMDM" id="74737189"/>
<dbReference type="jPOST" id="Q6P2C0"/>
<dbReference type="MassIVE" id="Q6P2C0"/>
<dbReference type="PaxDb" id="9606-ENSP00000268130"/>
<dbReference type="PeptideAtlas" id="Q6P2C0"/>
<dbReference type="ProteomicsDB" id="66884">
    <molecule id="Q6P2C0-1"/>
</dbReference>
<dbReference type="ProteomicsDB" id="66885">
    <molecule id="Q6P2C0-2"/>
</dbReference>
<dbReference type="Antibodypedia" id="54557">
    <property type="antibodies" value="65 antibodies from 15 providers"/>
</dbReference>
<dbReference type="DNASU" id="56964"/>
<dbReference type="Ensembl" id="ENST00000268130.12">
    <molecule id="Q6P2C0-1"/>
    <property type="protein sequence ID" value="ENSP00000268130.7"/>
    <property type="gene ID" value="ENSG00000140527.15"/>
</dbReference>
<dbReference type="Ensembl" id="ENST00000560294.5">
    <molecule id="Q6P2C0-2"/>
    <property type="protein sequence ID" value="ENSP00000453971.1"/>
    <property type="gene ID" value="ENSG00000140527.15"/>
</dbReference>
<dbReference type="GeneID" id="56964"/>
<dbReference type="KEGG" id="hsa:56964"/>
<dbReference type="MANE-Select" id="ENST00000268130.12">
    <property type="protein sequence ID" value="ENSP00000268130.7"/>
    <property type="RefSeq nucleotide sequence ID" value="NM_020212.2"/>
    <property type="RefSeq protein sequence ID" value="NP_064597.1"/>
</dbReference>
<dbReference type="UCSC" id="uc002boj.3">
    <molecule id="Q6P2C0-1"/>
    <property type="organism name" value="human"/>
</dbReference>
<dbReference type="AGR" id="HGNC:26924"/>
<dbReference type="CTD" id="56964"/>
<dbReference type="DisGeNET" id="56964"/>
<dbReference type="GeneCards" id="WDR93"/>
<dbReference type="HGNC" id="HGNC:26924">
    <property type="gene designation" value="WDR93"/>
</dbReference>
<dbReference type="HPA" id="ENSG00000140527">
    <property type="expression patterns" value="Tissue enhanced (choroid plexus, fallopian tube, testis)"/>
</dbReference>
<dbReference type="MalaCards" id="WDR93"/>
<dbReference type="MIM" id="619891">
    <property type="type" value="gene"/>
</dbReference>
<dbReference type="neXtProt" id="NX_Q6P2C0"/>
<dbReference type="OpenTargets" id="ENSG00000140527"/>
<dbReference type="PharmGKB" id="PA162409188"/>
<dbReference type="VEuPathDB" id="HostDB:ENSG00000140527"/>
<dbReference type="eggNOG" id="ENOG502QW2J">
    <property type="taxonomic scope" value="Eukaryota"/>
</dbReference>
<dbReference type="GeneTree" id="ENSGT00390000009995"/>
<dbReference type="HOGENOM" id="CLU_025331_0_0_1"/>
<dbReference type="InParanoid" id="Q6P2C0"/>
<dbReference type="OMA" id="YSHETES"/>
<dbReference type="OrthoDB" id="547231at2759"/>
<dbReference type="PAN-GO" id="Q6P2C0">
    <property type="GO annotations" value="1 GO annotation based on evolutionary models"/>
</dbReference>
<dbReference type="PhylomeDB" id="Q6P2C0"/>
<dbReference type="TreeFam" id="TF336347"/>
<dbReference type="PathwayCommons" id="Q6P2C0"/>
<dbReference type="BioGRID-ORCS" id="56964">
    <property type="hits" value="18 hits in 1147 CRISPR screens"/>
</dbReference>
<dbReference type="ChiTaRS" id="WDR93">
    <property type="organism name" value="human"/>
</dbReference>
<dbReference type="GenomeRNAi" id="56964"/>
<dbReference type="Pharos" id="Q6P2C0">
    <property type="development level" value="Tdark"/>
</dbReference>
<dbReference type="PRO" id="PR:Q6P2C0"/>
<dbReference type="Proteomes" id="UP000005640">
    <property type="component" value="Chromosome 15"/>
</dbReference>
<dbReference type="RNAct" id="Q6P2C0">
    <property type="molecule type" value="protein"/>
</dbReference>
<dbReference type="Bgee" id="ENSG00000140527">
    <property type="expression patterns" value="Expressed in oviduct epithelium and 94 other cell types or tissues"/>
</dbReference>
<dbReference type="ExpressionAtlas" id="Q6P2C0">
    <property type="expression patterns" value="baseline and differential"/>
</dbReference>
<dbReference type="GO" id="GO:0045271">
    <property type="term" value="C:respiratory chain complex I"/>
    <property type="evidence" value="ECO:0000318"/>
    <property type="project" value="GO_Central"/>
</dbReference>
<dbReference type="GO" id="GO:0022900">
    <property type="term" value="P:electron transport chain"/>
    <property type="evidence" value="ECO:0007669"/>
    <property type="project" value="InterPro"/>
</dbReference>
<dbReference type="FunFam" id="2.130.10.10:FF:001227">
    <property type="entry name" value="WD repeat domain 93"/>
    <property type="match status" value="1"/>
</dbReference>
<dbReference type="Gene3D" id="2.130.10.10">
    <property type="entry name" value="YVTN repeat-like/Quinoprotein amine dehydrogenase"/>
    <property type="match status" value="1"/>
</dbReference>
<dbReference type="InterPro" id="IPR006885">
    <property type="entry name" value="NADH_UbQ_FeS_4_mit-like"/>
</dbReference>
<dbReference type="InterPro" id="IPR015943">
    <property type="entry name" value="WD40/YVTN_repeat-like_dom_sf"/>
</dbReference>
<dbReference type="InterPro" id="IPR036322">
    <property type="entry name" value="WD40_repeat_dom_sf"/>
</dbReference>
<dbReference type="InterPro" id="IPR049547">
    <property type="entry name" value="WDR93_beta_propeller"/>
</dbReference>
<dbReference type="PANTHER" id="PTHR12219">
    <property type="entry name" value="NADH-UBIQUINONE OXIDOREDUCTASE"/>
    <property type="match status" value="1"/>
</dbReference>
<dbReference type="PANTHER" id="PTHR12219:SF17">
    <property type="entry name" value="WD REPEAT-CONTAINING PROTEIN 93"/>
    <property type="match status" value="1"/>
</dbReference>
<dbReference type="Pfam" id="PF21030">
    <property type="entry name" value="WDR93"/>
    <property type="match status" value="1"/>
</dbReference>
<dbReference type="SUPFAM" id="SSF50978">
    <property type="entry name" value="WD40 repeat-like"/>
    <property type="match status" value="1"/>
</dbReference>
<dbReference type="PROSITE" id="PS00678">
    <property type="entry name" value="WD_REPEATS_1"/>
    <property type="match status" value="1"/>
</dbReference>
<evidence type="ECO:0000256" key="1">
    <source>
        <dbReference type="SAM" id="MobiDB-lite"/>
    </source>
</evidence>
<evidence type="ECO:0000303" key="2">
    <source>
    </source>
</evidence>
<evidence type="ECO:0000305" key="3"/>
<comment type="alternative products">
    <event type="alternative splicing"/>
    <isoform>
        <id>Q6P2C0-1</id>
        <name>1</name>
        <sequence type="displayed"/>
    </isoform>
    <isoform>
        <id>Q6P2C0-2</id>
        <name>2</name>
        <sequence type="described" ref="VSP_031512"/>
    </isoform>
</comment>
<feature type="chain" id="PRO_0000319603" description="WD repeat-containing protein 93">
    <location>
        <begin position="1"/>
        <end position="686"/>
    </location>
</feature>
<feature type="repeat" description="WD">
    <location>
        <begin position="410"/>
        <end position="449"/>
    </location>
</feature>
<feature type="region of interest" description="Disordered" evidence="1">
    <location>
        <begin position="1"/>
        <end position="40"/>
    </location>
</feature>
<feature type="compositionally biased region" description="Polar residues" evidence="1">
    <location>
        <begin position="1"/>
        <end position="10"/>
    </location>
</feature>
<feature type="compositionally biased region" description="Basic and acidic residues" evidence="1">
    <location>
        <begin position="29"/>
        <end position="40"/>
    </location>
</feature>
<feature type="splice variant" id="VSP_031512" description="In isoform 2." evidence="2">
    <location>
        <begin position="443"/>
        <end position="470"/>
    </location>
</feature>
<feature type="sequence variant" id="VAR_039017" description="In dbSNP:rs4287542.">
    <original>L</original>
    <variation>H</variation>
    <location>
        <position position="66"/>
    </location>
</feature>
<feature type="sequence variant" id="VAR_039018" description="In dbSNP:rs7163367.">
    <original>S</original>
    <variation>T</variation>
    <location>
        <position position="254"/>
    </location>
</feature>
<feature type="sequence variant" id="VAR_039019" description="In dbSNP:rs7178234.">
    <original>T</original>
    <variation>M</variation>
    <location>
        <position position="352"/>
    </location>
</feature>
<feature type="sequence conflict" description="In Ref. 1; BAC05088." evidence="3" ref="1">
    <original>R</original>
    <variation>G</variation>
    <location>
        <position position="343"/>
    </location>
</feature>
<feature type="sequence conflict" description="In Ref. 1; BAC05088." evidence="3" ref="1">
    <original>K</original>
    <variation>R</variation>
    <location>
        <position position="553"/>
    </location>
</feature>
<feature type="sequence conflict" description="In Ref. 4; CAB98209/CAB98208." evidence="3" ref="4">
    <location>
        <position position="556"/>
    </location>
</feature>
<accession>Q6P2C0</accession>
<accession>Q8N7Y8</accession>
<accession>Q9NP89</accession>
<keyword id="KW-0025">Alternative splicing</keyword>
<keyword id="KW-1267">Proteomics identification</keyword>
<keyword id="KW-1185">Reference proteome</keyword>
<keyword id="KW-0853">WD repeat</keyword>